<gene>
    <name type="primary">PADI1</name>
    <name type="synonym">PAD1</name>
    <name type="synonym">PDI1</name>
</gene>
<comment type="function">
    <text evidence="2 3 4">Catalyzes the deimination of arginine residues of proteins.</text>
</comment>
<comment type="catalytic activity">
    <reaction evidence="2 3 4">
        <text>L-arginyl-[protein] + H2O = L-citrullyl-[protein] + NH4(+)</text>
        <dbReference type="Rhea" id="RHEA:18089"/>
        <dbReference type="Rhea" id="RHEA-COMP:10532"/>
        <dbReference type="Rhea" id="RHEA-COMP:10588"/>
        <dbReference type="ChEBI" id="CHEBI:15377"/>
        <dbReference type="ChEBI" id="CHEBI:28938"/>
        <dbReference type="ChEBI" id="CHEBI:29965"/>
        <dbReference type="ChEBI" id="CHEBI:83397"/>
        <dbReference type="EC" id="3.5.3.15"/>
    </reaction>
</comment>
<comment type="cofactor">
    <cofactor evidence="2 3">
        <name>Ca(2+)</name>
        <dbReference type="ChEBI" id="CHEBI:29108"/>
    </cofactor>
</comment>
<comment type="subunit">
    <text evidence="3">Monomer.</text>
</comment>
<comment type="interaction">
    <interactant intactId="EBI-10827384">
        <id>Q9ULC6</id>
    </interactant>
    <interactant intactId="EBI-1553984">
        <id>Q9UGK3</id>
        <label>STAP2</label>
    </interactant>
    <organismsDiffer>false</organismsDiffer>
    <experiments>2</experiments>
</comment>
<comment type="subcellular location">
    <subcellularLocation>
        <location evidence="2">Cytoplasm</location>
    </subcellularLocation>
</comment>
<comment type="tissue specificity">
    <text evidence="2">Detected in epidermal keratinocytes (at protein level). Epidermis, prostate, testis, placenta, spleen and thymus.</text>
</comment>
<comment type="similarity">
    <text evidence="5">Belongs to the protein arginine deiminase family.</text>
</comment>
<sequence>MAPKRVVQLSLKMPTHAVCVVGVEAHVDIHSDVPKGANSFRVSGSSGVEVFMVYNRTRVKEPIGKARWPLDTDADMVVSVGTASKELKDFKVRVSYFGEQEDQALGRSVLYLTGVDISLEVDTGRTGKVKRSQGDKKTWRWGPEGYGAILLVNCDRDNHRSAEPDLTHSWLMSLADLQDMSPMLLSCNGPDKLFDSHKLVLNVPFSDSKRVRVFCARGGNSLSDYKQVLGPQCLSYEVERQPGEQEIKFYVEGLTFPDADFLGLVSLSVSLVDPGTLPEVTLFTDTVGFRMAPWIMTPNTQPPEELYVCRVMDTHGSNEKFLEDMSYLTLKANCKLTICPQVENRNDRWIQDEMEFGYIEAPHKSFPVVFDSPRNRGLKDFPYKRILGPDFGYVTREIPLPGPSSLDSFGNLDVSPPVTVGGTEYPLGRILIGSSFPKSGGRQMARAVRNFLKAQQVQAPVELYSDWLSVGHVDEFLTFVPTSDQKGFRLLLASPSACLKLFQEKKEEGYGEAAQFDGLKHQAKRSINEMLADRHLQRDNLHAQKCIDWNRNVLKRELGLAESDIVDIPQLFFLKNFYAEAFFPDMVNMVVLGKYLGIPKPYGPIINGRCCLEEKVQSLLEPLGLHCIFIDDYLSYHELQGEIHCGTNVRRKPFPFKWWNMVP</sequence>
<organism>
    <name type="scientific">Homo sapiens</name>
    <name type="common">Human</name>
    <dbReference type="NCBI Taxonomy" id="9606"/>
    <lineage>
        <taxon>Eukaryota</taxon>
        <taxon>Metazoa</taxon>
        <taxon>Chordata</taxon>
        <taxon>Craniata</taxon>
        <taxon>Vertebrata</taxon>
        <taxon>Euteleostomi</taxon>
        <taxon>Mammalia</taxon>
        <taxon>Eutheria</taxon>
        <taxon>Euarchontoglires</taxon>
        <taxon>Primates</taxon>
        <taxon>Haplorrhini</taxon>
        <taxon>Catarrhini</taxon>
        <taxon>Hominidae</taxon>
        <taxon>Homo</taxon>
    </lineage>
</organism>
<evidence type="ECO:0000250" key="1">
    <source>
        <dbReference type="UniProtKB" id="Q9Y2J8"/>
    </source>
</evidence>
<evidence type="ECO:0000269" key="2">
    <source>
    </source>
</evidence>
<evidence type="ECO:0000269" key="3">
    <source>
    </source>
</evidence>
<evidence type="ECO:0000269" key="4">
    <source>
    </source>
</evidence>
<evidence type="ECO:0000305" key="5"/>
<evidence type="ECO:0000305" key="6">
    <source>
    </source>
</evidence>
<evidence type="ECO:0007744" key="7">
    <source>
        <dbReference type="PDB" id="5HP5"/>
    </source>
</evidence>
<evidence type="ECO:0007829" key="8">
    <source>
        <dbReference type="PDB" id="5HP5"/>
    </source>
</evidence>
<proteinExistence type="evidence at protein level"/>
<dbReference type="EC" id="3.5.3.15" evidence="2 3 4"/>
<dbReference type="EMBL" id="AB033768">
    <property type="protein sequence ID" value="BAA85771.1"/>
    <property type="molecule type" value="mRNA"/>
</dbReference>
<dbReference type="EMBL" id="AJ549502">
    <property type="protein sequence ID" value="CAE47741.1"/>
    <property type="molecule type" value="Genomic_DNA"/>
</dbReference>
<dbReference type="EMBL" id="AL590644">
    <property type="status" value="NOT_ANNOTATED_CDS"/>
    <property type="molecule type" value="Genomic_DNA"/>
</dbReference>
<dbReference type="EMBL" id="CH471134">
    <property type="protein sequence ID" value="EAW94833.1"/>
    <property type="molecule type" value="Genomic_DNA"/>
</dbReference>
<dbReference type="EMBL" id="BC130574">
    <property type="protein sequence ID" value="AAI30575.1"/>
    <property type="molecule type" value="mRNA"/>
</dbReference>
<dbReference type="EMBL" id="BC136402">
    <property type="protein sequence ID" value="AAI36403.1"/>
    <property type="molecule type" value="mRNA"/>
</dbReference>
<dbReference type="CCDS" id="CCDS178.1"/>
<dbReference type="RefSeq" id="NP_037490.2">
    <property type="nucleotide sequence ID" value="NM_013358.3"/>
</dbReference>
<dbReference type="PDB" id="5HP5">
    <property type="method" value="X-ray"/>
    <property type="resolution" value="3.20 A"/>
    <property type="chains" value="A/B=1-663"/>
</dbReference>
<dbReference type="PDBsum" id="5HP5"/>
<dbReference type="SMR" id="Q9ULC6"/>
<dbReference type="BioGRID" id="118980">
    <property type="interactions" value="13"/>
</dbReference>
<dbReference type="FunCoup" id="Q9ULC6">
    <property type="interactions" value="317"/>
</dbReference>
<dbReference type="IntAct" id="Q9ULC6">
    <property type="interactions" value="3"/>
</dbReference>
<dbReference type="STRING" id="9606.ENSP00000364620"/>
<dbReference type="BindingDB" id="Q9ULC6"/>
<dbReference type="ChEMBL" id="CHEMBL1909486"/>
<dbReference type="DrugBank" id="DB00155">
    <property type="generic name" value="Citrulline"/>
</dbReference>
<dbReference type="GuidetoPHARMACOLOGY" id="2894"/>
<dbReference type="GlyGen" id="Q9ULC6">
    <property type="glycosylation" value="1 site, 1 O-linked glycan (1 site)"/>
</dbReference>
<dbReference type="iPTMnet" id="Q9ULC6"/>
<dbReference type="PhosphoSitePlus" id="Q9ULC6"/>
<dbReference type="BioMuta" id="PADI1"/>
<dbReference type="DMDM" id="56757695"/>
<dbReference type="jPOST" id="Q9ULC6"/>
<dbReference type="MassIVE" id="Q9ULC6"/>
<dbReference type="PaxDb" id="9606-ENSP00000364620"/>
<dbReference type="PeptideAtlas" id="Q9ULC6"/>
<dbReference type="ProteomicsDB" id="84982"/>
<dbReference type="Antibodypedia" id="14640">
    <property type="antibodies" value="84 antibodies from 16 providers"/>
</dbReference>
<dbReference type="DNASU" id="29943"/>
<dbReference type="Ensembl" id="ENST00000375471.5">
    <property type="protein sequence ID" value="ENSP00000364620.4"/>
    <property type="gene ID" value="ENSG00000142623.11"/>
</dbReference>
<dbReference type="Ensembl" id="ENST00000631074.2">
    <property type="protein sequence ID" value="ENSP00000485803.1"/>
    <property type="gene ID" value="ENSG00000281459.3"/>
</dbReference>
<dbReference type="GeneID" id="29943"/>
<dbReference type="KEGG" id="hsa:29943"/>
<dbReference type="MANE-Select" id="ENST00000375471.5">
    <property type="protein sequence ID" value="ENSP00000364620.4"/>
    <property type="RefSeq nucleotide sequence ID" value="NM_013358.3"/>
    <property type="RefSeq protein sequence ID" value="NP_037490.2"/>
</dbReference>
<dbReference type="UCSC" id="uc001bah.2">
    <property type="organism name" value="human"/>
</dbReference>
<dbReference type="AGR" id="HGNC:18367"/>
<dbReference type="CTD" id="29943"/>
<dbReference type="DisGeNET" id="29943"/>
<dbReference type="GeneCards" id="PADI1"/>
<dbReference type="HGNC" id="HGNC:18367">
    <property type="gene designation" value="PADI1"/>
</dbReference>
<dbReference type="HPA" id="ENSG00000142623">
    <property type="expression patterns" value="Tissue enriched (esophagus)"/>
</dbReference>
<dbReference type="MIM" id="607934">
    <property type="type" value="gene"/>
</dbReference>
<dbReference type="neXtProt" id="NX_Q9ULC6"/>
<dbReference type="OpenTargets" id="ENSG00000142623"/>
<dbReference type="PharmGKB" id="PA32899"/>
<dbReference type="VEuPathDB" id="HostDB:ENSG00000142623"/>
<dbReference type="eggNOG" id="ENOG502QVJA">
    <property type="taxonomic scope" value="Eukaryota"/>
</dbReference>
<dbReference type="GeneTree" id="ENSGT00940000153217"/>
<dbReference type="HOGENOM" id="CLU_021911_0_0_1"/>
<dbReference type="InParanoid" id="Q9ULC6"/>
<dbReference type="OMA" id="VEVFMVY"/>
<dbReference type="OrthoDB" id="5102063at2759"/>
<dbReference type="PAN-GO" id="Q9ULC6">
    <property type="GO annotations" value="4 GO annotations based on evolutionary models"/>
</dbReference>
<dbReference type="PhylomeDB" id="Q9ULC6"/>
<dbReference type="TreeFam" id="TF331952"/>
<dbReference type="BioCyc" id="MetaCyc:HS06945-MONOMER"/>
<dbReference type="BRENDA" id="3.5.3.15">
    <property type="organism ID" value="2681"/>
</dbReference>
<dbReference type="PathwayCommons" id="Q9ULC6"/>
<dbReference type="Reactome" id="R-HSA-3247509">
    <property type="pathway name" value="Chromatin modifying enzymes"/>
</dbReference>
<dbReference type="SignaLink" id="Q9ULC6"/>
<dbReference type="BioGRID-ORCS" id="29943">
    <property type="hits" value="7 hits in 1152 CRISPR screens"/>
</dbReference>
<dbReference type="ChiTaRS" id="PADI1">
    <property type="organism name" value="human"/>
</dbReference>
<dbReference type="GeneWiki" id="PADI1"/>
<dbReference type="GenomeRNAi" id="29943"/>
<dbReference type="Pharos" id="Q9ULC6">
    <property type="development level" value="Tchem"/>
</dbReference>
<dbReference type="PRO" id="PR:Q9ULC6"/>
<dbReference type="Proteomes" id="UP000005640">
    <property type="component" value="Chromosome 1"/>
</dbReference>
<dbReference type="RNAct" id="Q9ULC6">
    <property type="molecule type" value="protein"/>
</dbReference>
<dbReference type="Bgee" id="ENSG00000142623">
    <property type="expression patterns" value="Expressed in lower esophagus mucosa and 66 other cell types or tissues"/>
</dbReference>
<dbReference type="GO" id="GO:0005737">
    <property type="term" value="C:cytoplasm"/>
    <property type="evidence" value="ECO:0000314"/>
    <property type="project" value="UniProtKB"/>
</dbReference>
<dbReference type="GO" id="GO:0005829">
    <property type="term" value="C:cytosol"/>
    <property type="evidence" value="ECO:0000314"/>
    <property type="project" value="HPA"/>
</dbReference>
<dbReference type="GO" id="GO:0005654">
    <property type="term" value="C:nucleoplasm"/>
    <property type="evidence" value="ECO:0000314"/>
    <property type="project" value="HPA"/>
</dbReference>
<dbReference type="GO" id="GO:0005634">
    <property type="term" value="C:nucleus"/>
    <property type="evidence" value="ECO:0000318"/>
    <property type="project" value="GO_Central"/>
</dbReference>
<dbReference type="GO" id="GO:0005509">
    <property type="term" value="F:calcium ion binding"/>
    <property type="evidence" value="ECO:0000314"/>
    <property type="project" value="UniProtKB"/>
</dbReference>
<dbReference type="GO" id="GO:0004668">
    <property type="term" value="F:protein-arginine deiminase activity"/>
    <property type="evidence" value="ECO:0000314"/>
    <property type="project" value="UniProtKB"/>
</dbReference>
<dbReference type="CDD" id="cd04214">
    <property type="entry name" value="PAD_N"/>
    <property type="match status" value="1"/>
</dbReference>
<dbReference type="FunFam" id="2.60.40.1860:FF:000006">
    <property type="entry name" value="protein-arginine deiminase type-1"/>
    <property type="match status" value="1"/>
</dbReference>
<dbReference type="FunFam" id="2.60.40.1700:FF:000001">
    <property type="entry name" value="Protein-arginine deiminase type-2"/>
    <property type="match status" value="1"/>
</dbReference>
<dbReference type="FunFam" id="3.75.10.10:FF:000003">
    <property type="entry name" value="Protein-arginine deiminase type-2"/>
    <property type="match status" value="1"/>
</dbReference>
<dbReference type="Gene3D" id="3.75.10.10">
    <property type="entry name" value="L-arginine/glycine Amidinotransferase, Chain A"/>
    <property type="match status" value="1"/>
</dbReference>
<dbReference type="Gene3D" id="2.60.40.1700">
    <property type="entry name" value="Protein-arginine deiminase, central domain"/>
    <property type="match status" value="1"/>
</dbReference>
<dbReference type="Gene3D" id="2.60.40.1860">
    <property type="entry name" value="Protein-arginine deiminase, N-terminal domain"/>
    <property type="match status" value="1"/>
</dbReference>
<dbReference type="InterPro" id="IPR008972">
    <property type="entry name" value="Cupredoxin"/>
</dbReference>
<dbReference type="InterPro" id="IPR004303">
    <property type="entry name" value="PAD"/>
</dbReference>
<dbReference type="InterPro" id="IPR013530">
    <property type="entry name" value="PAD_C"/>
</dbReference>
<dbReference type="InterPro" id="IPR036556">
    <property type="entry name" value="PAD_central_sf"/>
</dbReference>
<dbReference type="InterPro" id="IPR013732">
    <property type="entry name" value="PAD_N"/>
</dbReference>
<dbReference type="InterPro" id="IPR038685">
    <property type="entry name" value="PAD_N_sf"/>
</dbReference>
<dbReference type="InterPro" id="IPR013733">
    <property type="entry name" value="Prot_Arg_deaminase_cen_dom"/>
</dbReference>
<dbReference type="PANTHER" id="PTHR10837">
    <property type="entry name" value="PEPTIDYLARGININE DEIMINASE"/>
    <property type="match status" value="1"/>
</dbReference>
<dbReference type="PANTHER" id="PTHR10837:SF11">
    <property type="entry name" value="PROTEIN-ARGININE DEIMINASE TYPE-1"/>
    <property type="match status" value="1"/>
</dbReference>
<dbReference type="Pfam" id="PF03068">
    <property type="entry name" value="PAD"/>
    <property type="match status" value="1"/>
</dbReference>
<dbReference type="Pfam" id="PF08527">
    <property type="entry name" value="PAD_M"/>
    <property type="match status" value="1"/>
</dbReference>
<dbReference type="Pfam" id="PF08526">
    <property type="entry name" value="PAD_N"/>
    <property type="match status" value="1"/>
</dbReference>
<dbReference type="PIRSF" id="PIRSF001247">
    <property type="entry name" value="Protein-arginine_deiminase"/>
    <property type="match status" value="1"/>
</dbReference>
<dbReference type="SUPFAM" id="SSF49503">
    <property type="entry name" value="Cupredoxins"/>
    <property type="match status" value="1"/>
</dbReference>
<dbReference type="SUPFAM" id="SSF55909">
    <property type="entry name" value="Pentein"/>
    <property type="match status" value="1"/>
</dbReference>
<dbReference type="SUPFAM" id="SSF110083">
    <property type="entry name" value="Peptidylarginine deiminase Pad4, middle domain"/>
    <property type="match status" value="1"/>
</dbReference>
<keyword id="KW-0002">3D-structure</keyword>
<keyword id="KW-0106">Calcium</keyword>
<keyword id="KW-0963">Cytoplasm</keyword>
<keyword id="KW-0378">Hydrolase</keyword>
<keyword id="KW-0479">Metal-binding</keyword>
<keyword id="KW-1267">Proteomics identification</keyword>
<keyword id="KW-1185">Reference proteome</keyword>
<accession>Q9ULC6</accession>
<accession>A1L4K6</accession>
<accession>Q70SX6</accession>
<name>PADI1_HUMAN</name>
<protein>
    <recommendedName>
        <fullName>Protein-arginine deiminase type-1</fullName>
        <ecNumber evidence="2 3 4">3.5.3.15</ecNumber>
    </recommendedName>
    <alternativeName>
        <fullName>Peptidylarginine deiminase I</fullName>
    </alternativeName>
    <alternativeName>
        <fullName>Protein-arginine deiminase type I</fullName>
    </alternativeName>
</protein>
<feature type="chain" id="PRO_0000220023" description="Protein-arginine deiminase type-1">
    <location>
        <begin position="1"/>
        <end position="663"/>
    </location>
</feature>
<feature type="active site" description="Nucleophile" evidence="1">
    <location>
        <position position="645"/>
    </location>
</feature>
<feature type="binding site" evidence="6 7">
    <location>
        <position position="153"/>
    </location>
    <ligand>
        <name>Ca(2+)</name>
        <dbReference type="ChEBI" id="CHEBI:29108"/>
        <label>1</label>
    </ligand>
</feature>
<feature type="binding site" evidence="6 7">
    <location>
        <position position="155"/>
    </location>
    <ligand>
        <name>Ca(2+)</name>
        <dbReference type="ChEBI" id="CHEBI:29108"/>
        <label>1</label>
    </ligand>
</feature>
<feature type="binding site" evidence="6 7">
    <location>
        <position position="155"/>
    </location>
    <ligand>
        <name>Ca(2+)</name>
        <dbReference type="ChEBI" id="CHEBI:29108"/>
        <label>2</label>
    </ligand>
</feature>
<feature type="binding site" evidence="6 7">
    <location>
        <position position="157"/>
    </location>
    <ligand>
        <name>Ca(2+)</name>
        <dbReference type="ChEBI" id="CHEBI:29108"/>
        <label>1</label>
    </ligand>
</feature>
<feature type="binding site" evidence="6 7">
    <location>
        <position position="157"/>
    </location>
    <ligand>
        <name>Ca(2+)</name>
        <dbReference type="ChEBI" id="CHEBI:29108"/>
        <label>2</label>
    </ligand>
</feature>
<feature type="binding site" evidence="6 7">
    <location>
        <position position="165"/>
    </location>
    <ligand>
        <name>Ca(2+)</name>
        <dbReference type="ChEBI" id="CHEBI:29108"/>
        <label>1</label>
    </ligand>
</feature>
<feature type="binding site" evidence="6 7">
    <location>
        <position position="176"/>
    </location>
    <ligand>
        <name>Ca(2+)</name>
        <dbReference type="ChEBI" id="CHEBI:29108"/>
        <label>1</label>
    </ligand>
</feature>
<feature type="binding site" evidence="6 7">
    <location>
        <position position="179"/>
    </location>
    <ligand>
        <name>Ca(2+)</name>
        <dbReference type="ChEBI" id="CHEBI:29108"/>
        <label>1</label>
    </ligand>
</feature>
<feature type="binding site" evidence="6 7">
    <location>
        <position position="179"/>
    </location>
    <ligand>
        <name>Ca(2+)</name>
        <dbReference type="ChEBI" id="CHEBI:29108"/>
        <label>2</label>
    </ligand>
</feature>
<feature type="binding site" evidence="6 7">
    <location>
        <position position="351"/>
    </location>
    <ligand>
        <name>Ca(2+)</name>
        <dbReference type="ChEBI" id="CHEBI:29108"/>
        <label>4</label>
    </ligand>
</feature>
<feature type="binding site" evidence="6 7">
    <location>
        <position position="353"/>
    </location>
    <ligand>
        <name>Ca(2+)</name>
        <dbReference type="ChEBI" id="CHEBI:29108"/>
        <label>3</label>
    </ligand>
</feature>
<feature type="binding site" evidence="6 7">
    <location>
        <position position="364"/>
    </location>
    <ligand>
        <name>Ca(2+)</name>
        <dbReference type="ChEBI" id="CHEBI:29108"/>
        <label>2</label>
    </ligand>
</feature>
<feature type="binding site" evidence="6 7">
    <location>
        <position position="371"/>
    </location>
    <ligand>
        <name>Ca(2+)</name>
        <dbReference type="ChEBI" id="CHEBI:29108"/>
        <label>3</label>
    </ligand>
</feature>
<feature type="binding site" evidence="6 7">
    <location>
        <position position="372"/>
    </location>
    <ligand>
        <name>Ca(2+)</name>
        <dbReference type="ChEBI" id="CHEBI:29108"/>
        <label>3</label>
    </ligand>
</feature>
<feature type="binding site" evidence="6 7">
    <location>
        <position position="375"/>
    </location>
    <ligand>
        <name>Ca(2+)</name>
        <dbReference type="ChEBI" id="CHEBI:29108"/>
        <label>3</label>
    </ligand>
</feature>
<feature type="binding site" evidence="6 7">
    <location>
        <position position="409"/>
    </location>
    <ligand>
        <name>Ca(2+)</name>
        <dbReference type="ChEBI" id="CHEBI:29108"/>
        <label>4</label>
    </ligand>
</feature>
<feature type="binding site" evidence="6 7">
    <location>
        <position position="412"/>
    </location>
    <ligand>
        <name>Ca(2+)</name>
        <dbReference type="ChEBI" id="CHEBI:29108"/>
        <label>4</label>
    </ligand>
</feature>
<feature type="sequence variant" id="VAR_053557" description="In dbSNP:rs16824215.">
    <original>V</original>
    <variation>M</variation>
    <location>
        <position position="649"/>
    </location>
</feature>
<feature type="sequence conflict" description="In Ref. 1; BAA85771." evidence="5" ref="1">
    <original>V</original>
    <variation>G</variation>
    <location>
        <position position="420"/>
    </location>
</feature>
<feature type="sequence conflict" description="In Ref. 1; BAA85771." evidence="5" ref="1">
    <original>L</original>
    <variation>P</variation>
    <location>
        <position position="499"/>
    </location>
</feature>
<feature type="strand" evidence="8">
    <location>
        <begin position="11"/>
        <end position="13"/>
    </location>
</feature>
<feature type="strand" evidence="8">
    <location>
        <begin position="15"/>
        <end position="20"/>
    </location>
</feature>
<feature type="strand" evidence="8">
    <location>
        <begin position="25"/>
        <end position="27"/>
    </location>
</feature>
<feature type="strand" evidence="8">
    <location>
        <begin position="39"/>
        <end position="53"/>
    </location>
</feature>
<feature type="strand" evidence="8">
    <location>
        <begin position="55"/>
        <end position="57"/>
    </location>
</feature>
<feature type="strand" evidence="8">
    <location>
        <begin position="60"/>
        <end position="62"/>
    </location>
</feature>
<feature type="strand" evidence="8">
    <location>
        <begin position="68"/>
        <end position="70"/>
    </location>
</feature>
<feature type="strand" evidence="8">
    <location>
        <begin position="72"/>
        <end position="74"/>
    </location>
</feature>
<feature type="strand" evidence="8">
    <location>
        <begin position="77"/>
        <end position="80"/>
    </location>
</feature>
<feature type="strand" evidence="8">
    <location>
        <begin position="90"/>
        <end position="97"/>
    </location>
</feature>
<feature type="strand" evidence="8">
    <location>
        <begin position="105"/>
        <end position="121"/>
    </location>
</feature>
<feature type="strand" evidence="8">
    <location>
        <begin position="124"/>
        <end position="128"/>
    </location>
</feature>
<feature type="strand" evidence="8">
    <location>
        <begin position="147"/>
        <end position="150"/>
    </location>
</feature>
<feature type="helix" evidence="8">
    <location>
        <begin position="165"/>
        <end position="167"/>
    </location>
</feature>
<feature type="helix" evidence="8">
    <location>
        <begin position="175"/>
        <end position="179"/>
    </location>
</feature>
<feature type="strand" evidence="8">
    <location>
        <begin position="180"/>
        <end position="189"/>
    </location>
</feature>
<feature type="helix" evidence="8">
    <location>
        <begin position="191"/>
        <end position="194"/>
    </location>
</feature>
<feature type="strand" evidence="8">
    <location>
        <begin position="197"/>
        <end position="202"/>
    </location>
</feature>
<feature type="turn" evidence="8">
    <location>
        <begin position="205"/>
        <end position="210"/>
    </location>
</feature>
<feature type="strand" evidence="8">
    <location>
        <begin position="211"/>
        <end position="218"/>
    </location>
</feature>
<feature type="helix" evidence="8">
    <location>
        <begin position="222"/>
        <end position="224"/>
    </location>
</feature>
<feature type="strand" evidence="8">
    <location>
        <begin position="225"/>
        <end position="229"/>
    </location>
</feature>
<feature type="strand" evidence="8">
    <location>
        <begin position="235"/>
        <end position="237"/>
    </location>
</feature>
<feature type="strand" evidence="8">
    <location>
        <begin position="246"/>
        <end position="253"/>
    </location>
</feature>
<feature type="strand" evidence="8">
    <location>
        <begin position="263"/>
        <end position="273"/>
    </location>
</feature>
<feature type="strand" evidence="8">
    <location>
        <begin position="280"/>
        <end position="291"/>
    </location>
</feature>
<feature type="strand" evidence="8">
    <location>
        <begin position="303"/>
        <end position="309"/>
    </location>
</feature>
<feature type="strand" evidence="8">
    <location>
        <begin position="314"/>
        <end position="316"/>
    </location>
</feature>
<feature type="helix" evidence="8">
    <location>
        <begin position="319"/>
        <end position="331"/>
    </location>
</feature>
<feature type="strand" evidence="8">
    <location>
        <begin position="335"/>
        <end position="339"/>
    </location>
</feature>
<feature type="helix" evidence="8">
    <location>
        <begin position="341"/>
        <end position="344"/>
    </location>
</feature>
<feature type="turn" evidence="8">
    <location>
        <begin position="351"/>
        <end position="353"/>
    </location>
</feature>
<feature type="strand" evidence="8">
    <location>
        <begin position="354"/>
        <end position="360"/>
    </location>
</feature>
<feature type="strand" evidence="8">
    <location>
        <begin position="365"/>
        <end position="371"/>
    </location>
</feature>
<feature type="strand" evidence="8">
    <location>
        <begin position="376"/>
        <end position="378"/>
    </location>
</feature>
<feature type="helix" evidence="8">
    <location>
        <begin position="381"/>
        <end position="384"/>
    </location>
</feature>
<feature type="strand" evidence="8">
    <location>
        <begin position="392"/>
        <end position="395"/>
    </location>
</feature>
<feature type="helix" evidence="8">
    <location>
        <begin position="405"/>
        <end position="407"/>
    </location>
</feature>
<feature type="helix" evidence="8">
    <location>
        <begin position="409"/>
        <end position="411"/>
    </location>
</feature>
<feature type="strand" evidence="8">
    <location>
        <begin position="412"/>
        <end position="414"/>
    </location>
</feature>
<feature type="strand" evidence="8">
    <location>
        <begin position="418"/>
        <end position="420"/>
    </location>
</feature>
<feature type="strand" evidence="8">
    <location>
        <begin position="423"/>
        <end position="425"/>
    </location>
</feature>
<feature type="strand" evidence="8">
    <location>
        <begin position="430"/>
        <end position="435"/>
    </location>
</feature>
<feature type="helix" evidence="8">
    <location>
        <begin position="446"/>
        <end position="454"/>
    </location>
</feature>
<feature type="strand" evidence="8">
    <location>
        <begin position="461"/>
        <end position="464"/>
    </location>
</feature>
<feature type="strand" evidence="8">
    <location>
        <begin position="468"/>
        <end position="470"/>
    </location>
</feature>
<feature type="turn" evidence="8">
    <location>
        <begin position="473"/>
        <end position="476"/>
    </location>
</feature>
<feature type="strand" evidence="8">
    <location>
        <begin position="477"/>
        <end position="481"/>
    </location>
</feature>
<feature type="strand" evidence="8">
    <location>
        <begin position="483"/>
        <end position="494"/>
    </location>
</feature>
<feature type="helix" evidence="8">
    <location>
        <begin position="495"/>
        <end position="506"/>
    </location>
</feature>
<feature type="strand" evidence="8">
    <location>
        <begin position="507"/>
        <end position="509"/>
    </location>
</feature>
<feature type="helix" evidence="8">
    <location>
        <begin position="528"/>
        <end position="531"/>
    </location>
</feature>
<feature type="helix" evidence="8">
    <location>
        <begin position="536"/>
        <end position="558"/>
    </location>
</feature>
<feature type="turn" evidence="8">
    <location>
        <begin position="562"/>
        <end position="564"/>
    </location>
</feature>
<feature type="strand" evidence="8">
    <location>
        <begin position="565"/>
        <end position="569"/>
    </location>
</feature>
<feature type="strand" evidence="8">
    <location>
        <begin position="572"/>
        <end position="575"/>
    </location>
</feature>
<feature type="strand" evidence="8">
    <location>
        <begin position="578"/>
        <end position="583"/>
    </location>
</feature>
<feature type="strand" evidence="8">
    <location>
        <begin position="586"/>
        <end position="588"/>
    </location>
</feature>
<feature type="strand" evidence="8">
    <location>
        <begin position="590"/>
        <end position="592"/>
    </location>
</feature>
<feature type="strand" evidence="8">
    <location>
        <begin position="595"/>
        <end position="599"/>
    </location>
</feature>
<feature type="helix" evidence="8">
    <location>
        <begin position="611"/>
        <end position="620"/>
    </location>
</feature>
<feature type="helix" evidence="8">
    <location>
        <begin position="621"/>
        <end position="623"/>
    </location>
</feature>
<feature type="strand" evidence="8">
    <location>
        <begin position="626"/>
        <end position="630"/>
    </location>
</feature>
<feature type="turn" evidence="8">
    <location>
        <begin position="633"/>
        <end position="636"/>
    </location>
</feature>
<feature type="helix" evidence="8">
    <location>
        <begin position="637"/>
        <end position="639"/>
    </location>
</feature>
<feature type="helix" evidence="8">
    <location>
        <begin position="643"/>
        <end position="646"/>
    </location>
</feature>
<feature type="strand" evidence="8">
    <location>
        <begin position="647"/>
        <end position="651"/>
    </location>
</feature>
<feature type="helix" evidence="8">
    <location>
        <begin position="658"/>
        <end position="660"/>
    </location>
</feature>
<reference key="1">
    <citation type="journal article" date="2003" name="Biochem. J.">
        <title>cDNA cloning, gene organization and expression analysis of human peptidylarginine deiminase type I.</title>
        <authorList>
            <person name="Guerrin M."/>
            <person name="Ishigami A."/>
            <person name="Mechin M.-C."/>
            <person name="Nachat R."/>
            <person name="Valmary S."/>
            <person name="Sebbag M."/>
            <person name="Simon M."/>
            <person name="Senshu T."/>
            <person name="Serre G."/>
        </authorList>
    </citation>
    <scope>NUCLEOTIDE SEQUENCE [MRNA]</scope>
    <scope>CATALYTIC ACTIVITY</scope>
    <scope>FUNCTION</scope>
    <scope>COFACTOR</scope>
    <scope>TISSUE SPECIFICITY</scope>
    <scope>SUBCELLULAR LOCATION</scope>
    <source>
        <tissue>Epidermis</tissue>
    </source>
</reference>
<reference key="2">
    <citation type="journal article" date="2004" name="Gene">
        <title>Comparative analysis of the mouse and human peptidylarginine deiminase gene clusters reveals highly conserved non-coding segments and a new human gene, PADI6.</title>
        <authorList>
            <person name="Chavanas S."/>
            <person name="Mechin M.-C."/>
            <person name="Takahara H."/>
            <person name="Kawada A."/>
            <person name="Nachat R."/>
            <person name="Serre G."/>
            <person name="Simon M."/>
        </authorList>
    </citation>
    <scope>NUCLEOTIDE SEQUENCE [GENOMIC DNA]</scope>
</reference>
<reference key="3">
    <citation type="journal article" date="2006" name="Nature">
        <title>The DNA sequence and biological annotation of human chromosome 1.</title>
        <authorList>
            <person name="Gregory S.G."/>
            <person name="Barlow K.F."/>
            <person name="McLay K.E."/>
            <person name="Kaul R."/>
            <person name="Swarbreck D."/>
            <person name="Dunham A."/>
            <person name="Scott C.E."/>
            <person name="Howe K.L."/>
            <person name="Woodfine K."/>
            <person name="Spencer C.C.A."/>
            <person name="Jones M.C."/>
            <person name="Gillson C."/>
            <person name="Searle S."/>
            <person name="Zhou Y."/>
            <person name="Kokocinski F."/>
            <person name="McDonald L."/>
            <person name="Evans R."/>
            <person name="Phillips K."/>
            <person name="Atkinson A."/>
            <person name="Cooper R."/>
            <person name="Jones C."/>
            <person name="Hall R.E."/>
            <person name="Andrews T.D."/>
            <person name="Lloyd C."/>
            <person name="Ainscough R."/>
            <person name="Almeida J.P."/>
            <person name="Ambrose K.D."/>
            <person name="Anderson F."/>
            <person name="Andrew R.W."/>
            <person name="Ashwell R.I.S."/>
            <person name="Aubin K."/>
            <person name="Babbage A.K."/>
            <person name="Bagguley C.L."/>
            <person name="Bailey J."/>
            <person name="Beasley H."/>
            <person name="Bethel G."/>
            <person name="Bird C.P."/>
            <person name="Bray-Allen S."/>
            <person name="Brown J.Y."/>
            <person name="Brown A.J."/>
            <person name="Buckley D."/>
            <person name="Burton J."/>
            <person name="Bye J."/>
            <person name="Carder C."/>
            <person name="Chapman J.C."/>
            <person name="Clark S.Y."/>
            <person name="Clarke G."/>
            <person name="Clee C."/>
            <person name="Cobley V."/>
            <person name="Collier R.E."/>
            <person name="Corby N."/>
            <person name="Coville G.J."/>
            <person name="Davies J."/>
            <person name="Deadman R."/>
            <person name="Dunn M."/>
            <person name="Earthrowl M."/>
            <person name="Ellington A.G."/>
            <person name="Errington H."/>
            <person name="Frankish A."/>
            <person name="Frankland J."/>
            <person name="French L."/>
            <person name="Garner P."/>
            <person name="Garnett J."/>
            <person name="Gay L."/>
            <person name="Ghori M.R.J."/>
            <person name="Gibson R."/>
            <person name="Gilby L.M."/>
            <person name="Gillett W."/>
            <person name="Glithero R.J."/>
            <person name="Grafham D.V."/>
            <person name="Griffiths C."/>
            <person name="Griffiths-Jones S."/>
            <person name="Grocock R."/>
            <person name="Hammond S."/>
            <person name="Harrison E.S.I."/>
            <person name="Hart E."/>
            <person name="Haugen E."/>
            <person name="Heath P.D."/>
            <person name="Holmes S."/>
            <person name="Holt K."/>
            <person name="Howden P.J."/>
            <person name="Hunt A.R."/>
            <person name="Hunt S.E."/>
            <person name="Hunter G."/>
            <person name="Isherwood J."/>
            <person name="James R."/>
            <person name="Johnson C."/>
            <person name="Johnson D."/>
            <person name="Joy A."/>
            <person name="Kay M."/>
            <person name="Kershaw J.K."/>
            <person name="Kibukawa M."/>
            <person name="Kimberley A.M."/>
            <person name="King A."/>
            <person name="Knights A.J."/>
            <person name="Lad H."/>
            <person name="Laird G."/>
            <person name="Lawlor S."/>
            <person name="Leongamornlert D.A."/>
            <person name="Lloyd D.M."/>
            <person name="Loveland J."/>
            <person name="Lovell J."/>
            <person name="Lush M.J."/>
            <person name="Lyne R."/>
            <person name="Martin S."/>
            <person name="Mashreghi-Mohammadi M."/>
            <person name="Matthews L."/>
            <person name="Matthews N.S.W."/>
            <person name="McLaren S."/>
            <person name="Milne S."/>
            <person name="Mistry S."/>
            <person name="Moore M.J.F."/>
            <person name="Nickerson T."/>
            <person name="O'Dell C.N."/>
            <person name="Oliver K."/>
            <person name="Palmeiri A."/>
            <person name="Palmer S.A."/>
            <person name="Parker A."/>
            <person name="Patel D."/>
            <person name="Pearce A.V."/>
            <person name="Peck A.I."/>
            <person name="Pelan S."/>
            <person name="Phelps K."/>
            <person name="Phillimore B.J."/>
            <person name="Plumb R."/>
            <person name="Rajan J."/>
            <person name="Raymond C."/>
            <person name="Rouse G."/>
            <person name="Saenphimmachak C."/>
            <person name="Sehra H.K."/>
            <person name="Sheridan E."/>
            <person name="Shownkeen R."/>
            <person name="Sims S."/>
            <person name="Skuce C.D."/>
            <person name="Smith M."/>
            <person name="Steward C."/>
            <person name="Subramanian S."/>
            <person name="Sycamore N."/>
            <person name="Tracey A."/>
            <person name="Tromans A."/>
            <person name="Van Helmond Z."/>
            <person name="Wall M."/>
            <person name="Wallis J.M."/>
            <person name="White S."/>
            <person name="Whitehead S.L."/>
            <person name="Wilkinson J.E."/>
            <person name="Willey D.L."/>
            <person name="Williams H."/>
            <person name="Wilming L."/>
            <person name="Wray P.W."/>
            <person name="Wu Z."/>
            <person name="Coulson A."/>
            <person name="Vaudin M."/>
            <person name="Sulston J.E."/>
            <person name="Durbin R.M."/>
            <person name="Hubbard T."/>
            <person name="Wooster R."/>
            <person name="Dunham I."/>
            <person name="Carter N.P."/>
            <person name="McVean G."/>
            <person name="Ross M.T."/>
            <person name="Harrow J."/>
            <person name="Olson M.V."/>
            <person name="Beck S."/>
            <person name="Rogers J."/>
            <person name="Bentley D.R."/>
        </authorList>
    </citation>
    <scope>NUCLEOTIDE SEQUENCE [LARGE SCALE GENOMIC DNA]</scope>
</reference>
<reference key="4">
    <citation type="submission" date="2005-07" db="EMBL/GenBank/DDBJ databases">
        <authorList>
            <person name="Mural R.J."/>
            <person name="Istrail S."/>
            <person name="Sutton G.G."/>
            <person name="Florea L."/>
            <person name="Halpern A.L."/>
            <person name="Mobarry C.M."/>
            <person name="Lippert R."/>
            <person name="Walenz B."/>
            <person name="Shatkay H."/>
            <person name="Dew I."/>
            <person name="Miller J.R."/>
            <person name="Flanigan M.J."/>
            <person name="Edwards N.J."/>
            <person name="Bolanos R."/>
            <person name="Fasulo D."/>
            <person name="Halldorsson B.V."/>
            <person name="Hannenhalli S."/>
            <person name="Turner R."/>
            <person name="Yooseph S."/>
            <person name="Lu F."/>
            <person name="Nusskern D.R."/>
            <person name="Shue B.C."/>
            <person name="Zheng X.H."/>
            <person name="Zhong F."/>
            <person name="Delcher A.L."/>
            <person name="Huson D.H."/>
            <person name="Kravitz S.A."/>
            <person name="Mouchard L."/>
            <person name="Reinert K."/>
            <person name="Remington K.A."/>
            <person name="Clark A.G."/>
            <person name="Waterman M.S."/>
            <person name="Eichler E.E."/>
            <person name="Adams M.D."/>
            <person name="Hunkapiller M.W."/>
            <person name="Myers E.W."/>
            <person name="Venter J.C."/>
        </authorList>
    </citation>
    <scope>NUCLEOTIDE SEQUENCE [LARGE SCALE GENOMIC DNA]</scope>
</reference>
<reference key="5">
    <citation type="journal article" date="2004" name="Genome Res.">
        <title>The status, quality, and expansion of the NIH full-length cDNA project: the Mammalian Gene Collection (MGC).</title>
        <authorList>
            <consortium name="The MGC Project Team"/>
        </authorList>
    </citation>
    <scope>NUCLEOTIDE SEQUENCE [LARGE SCALE MRNA]</scope>
</reference>
<reference key="6">
    <citation type="journal article" date="2018" name="ACS Chem. Biol.">
        <title>Citrullination Inactivates Nicotinamide- N-methyltransferase.</title>
        <authorList>
            <person name="Nemmara V.V."/>
            <person name="Tilvawala R."/>
            <person name="Salinger A.J."/>
            <person name="Miller L."/>
            <person name="Nguyen S.H."/>
            <person name="Weerapana E."/>
            <person name="Thompson P.R."/>
        </authorList>
    </citation>
    <scope>FUNCTION</scope>
    <scope>CATALYTIC ACTIVITY</scope>
</reference>
<reference evidence="7" key="7">
    <citation type="journal article" date="2016" name="J. Mol. Biol.">
        <title>Monomeric Form of Peptidylarginine Deiminase Type I Revealed by X-ray Crystallography and Small-Angle X-ray Scattering.</title>
        <authorList>
            <person name="Saijo S."/>
            <person name="Nagai A."/>
            <person name="Kinjo S."/>
            <person name="Mashimo R."/>
            <person name="Akimoto M."/>
            <person name="Kizawa K."/>
            <person name="Yabe-Wada T."/>
            <person name="Shimizu N."/>
            <person name="Takahara H."/>
            <person name="Unno M."/>
        </authorList>
    </citation>
    <scope>X-RAY CRYSTALLOGRAPHY (3.20 ANGSTROMS) IN COMPLEX WITH CALCIUM</scope>
    <scope>CATALYTIC ACTIVITY</scope>
    <scope>FUNCTION</scope>
    <scope>COFACTOR</scope>
    <scope>SUBUNIT</scope>
</reference>